<evidence type="ECO:0000250" key="1"/>
<evidence type="ECO:0000255" key="2"/>
<evidence type="ECO:0000305" key="3"/>
<evidence type="ECO:0007829" key="4">
    <source>
        <dbReference type="PDB" id="1SVF"/>
    </source>
</evidence>
<evidence type="ECO:0007829" key="5">
    <source>
        <dbReference type="PDB" id="4GIP"/>
    </source>
</evidence>
<evidence type="ECO:0007829" key="6">
    <source>
        <dbReference type="PDB" id="4WSG"/>
    </source>
</evidence>
<proteinExistence type="evidence at protein level"/>
<organism>
    <name type="scientific">Parainfluenza virus 5 (strain W3)</name>
    <name type="common">PIV5</name>
    <name type="synonym">Simian virus 5</name>
    <dbReference type="NCBI Taxonomy" id="11208"/>
    <lineage>
        <taxon>Viruses</taxon>
        <taxon>Riboviria</taxon>
        <taxon>Orthornavirae</taxon>
        <taxon>Negarnaviricota</taxon>
        <taxon>Haploviricotina</taxon>
        <taxon>Monjiviricetes</taxon>
        <taxon>Mononegavirales</taxon>
        <taxon>Paramyxoviridae</taxon>
        <taxon>Rubulavirinae</taxon>
        <taxon>Orthorubulavirus</taxon>
        <taxon>Orthorubulavirus mammalis</taxon>
        <taxon>Mammalian orthorubulavirus 5</taxon>
    </lineage>
</organism>
<comment type="function">
    <text evidence="1">Class I viral fusion protein. Under the current model, the protein has at least 3 conformational states: pre-fusion native state, pre-hairpin intermediate state, and post-fusion hairpin state. During viral and plasma cell membrane fusion, the heptad repeat (HR) regions assume a trimer-of-hairpins structure, positioning the fusion peptide in close proximity to the C-terminal region of the ectodomain. The formation of this structure appears to drive apposition and subsequent fusion of viral and plasma cell membranes. Directs fusion of viral and cellular membranes leading to delivery of the nucleocapsid into the cytoplasm. This fusion is pH independent and occurs directly at the outer cell membrane. The trimer of F1-F2 (F protein) probably interacts with HN at the virion surface. Upon HN binding to its cellular receptor, the hydrophobic fusion peptide is unmasked and interacts with the cellular membrane, inducing the fusion between cell and virion membranes. Later in infection, F proteins expressed at the plasma membrane of infected cells could mediate fusion with adjacent cells to form syncytia, a cytopathic effect that could lead to tissue necrosis (By similarity).</text>
</comment>
<comment type="subunit">
    <text>Homotrimer of disulfide-linked F1-F2.</text>
</comment>
<comment type="subcellular location">
    <subcellularLocation>
        <location evidence="1">Virion membrane</location>
        <topology evidence="1">Single-pass type I membrane protein</topology>
    </subcellularLocation>
    <subcellularLocation>
        <location evidence="1">Host cell membrane</location>
        <topology evidence="1">Single-pass membrane protein</topology>
    </subcellularLocation>
</comment>
<comment type="PTM">
    <text>The inactive precursor F0 is glycosylated and proteolytically cleaved into F1 and F2 to be functionally active. The cleavage is mediated by cellular proteases during the transport and maturation of the polypeptide.</text>
</comment>
<comment type="similarity">
    <text evidence="3">Belongs to the paramyxoviruses fusion glycoprotein family.</text>
</comment>
<sequence>MGTIIQFLVVSCLLAGAGSLDPAALMQIGVIPTNVRQLMYYTEASSAFIVVKLMPTIDSPISGCNITSISSYNATVTKLLQPIGENLETIRNQLIPTRRRRRFAGVVIGLAALGVATAAQVTAAVALVKANENAAAILNLKNAIQKTNAAVADVVQATQSLGTAVQAVQDHINSVVSPAITAANCKAQDAIIGSILNLYLTELTTIFHNQITNPALSPITIQALRILLGSTLPTVVEKSFNTQISAAELLSSGLLTGQIVGLDLTYMQMVIKIELPTLTVQPATQIIDLATISAFINNQEVMAQLPTRVMVTGSLIQAYPASQCTITPNTVYCRYNDAQVLSDDTMACLQGNLTRCTFSPVVGSFLTRFVLFDGIVYANCRSMLCKCMQPAAVILQPSSSPVTVIDMYKCVSLQLDNLRFTITQLANVTYNSTIKLESSQILSIDPLDISQNLAAVNKSLSDALQHLAQSDTYLSAITSATTTSVLSIIAICLGSLGLILIILLSVVVWKLLTIVVANRNRMENFVYHK</sequence>
<feature type="signal peptide" evidence="2">
    <location>
        <begin position="1"/>
        <end position="19"/>
    </location>
</feature>
<feature type="chain" id="PRO_0000039378" description="Fusion glycoprotein F0">
    <location>
        <begin position="20"/>
        <end position="529"/>
    </location>
</feature>
<feature type="chain" id="PRO_0000039379" description="Fusion glycoprotein F2">
    <location>
        <begin position="20"/>
        <end position="102"/>
    </location>
</feature>
<feature type="chain" id="PRO_0000039380" description="Fusion glycoprotein F1">
    <location>
        <begin position="103"/>
        <end position="529"/>
    </location>
</feature>
<feature type="topological domain" description="Extracellular" evidence="1">
    <location>
        <begin position="20"/>
        <end position="487"/>
    </location>
</feature>
<feature type="transmembrane region" description="Helical" evidence="1">
    <location>
        <begin position="488"/>
        <end position="508"/>
    </location>
</feature>
<feature type="topological domain" description="Cytoplasmic" evidence="1">
    <location>
        <begin position="509"/>
        <end position="529"/>
    </location>
</feature>
<feature type="region of interest" description="Fusion peptide">
    <location>
        <begin position="103"/>
        <end position="127"/>
    </location>
</feature>
<feature type="coiled-coil region" evidence="2">
    <location>
        <begin position="128"/>
        <end position="156"/>
    </location>
</feature>
<feature type="coiled-coil region" evidence="2">
    <location>
        <begin position="452"/>
        <end position="477"/>
    </location>
</feature>
<feature type="site" description="Cleavage; by host" evidence="1">
    <location>
        <begin position="102"/>
        <end position="103"/>
    </location>
</feature>
<feature type="glycosylation site" description="N-linked (GlcNAc...) asparagine; by host" evidence="2">
    <location>
        <position position="65"/>
    </location>
</feature>
<feature type="glycosylation site" description="N-linked (GlcNAc...) asparagine; by host" evidence="2">
    <location>
        <position position="73"/>
    </location>
</feature>
<feature type="glycosylation site" description="N-linked (GlcNAc...) asparagine; by host" evidence="2">
    <location>
        <position position="352"/>
    </location>
</feature>
<feature type="glycosylation site" description="N-linked (GlcNAc...) asparagine; by host" evidence="2">
    <location>
        <position position="427"/>
    </location>
</feature>
<feature type="glycosylation site" description="N-linked (GlcNAc...) asparagine; by host" evidence="2">
    <location>
        <position position="431"/>
    </location>
</feature>
<feature type="glycosylation site" description="N-linked (GlcNAc...) asparagine; by host" evidence="2">
    <location>
        <position position="457"/>
    </location>
</feature>
<feature type="disulfide bond" description="Interchain (between F2 and F1 chains)" evidence="1">
    <location>
        <begin position="64"/>
        <end position="185"/>
    </location>
</feature>
<feature type="disulfide bond" evidence="1">
    <location>
        <begin position="324"/>
        <end position="333"/>
    </location>
</feature>
<feature type="disulfide bond" evidence="1">
    <location>
        <begin position="348"/>
        <end position="356"/>
    </location>
</feature>
<feature type="disulfide bond" evidence="1">
    <location>
        <begin position="380"/>
        <end position="385"/>
    </location>
</feature>
<feature type="disulfide bond" evidence="1">
    <location>
        <begin position="387"/>
        <end position="410"/>
    </location>
</feature>
<feature type="helix" evidence="5">
    <location>
        <begin position="22"/>
        <end position="26"/>
    </location>
</feature>
<feature type="turn" evidence="5">
    <location>
        <begin position="27"/>
        <end position="29"/>
    </location>
</feature>
<feature type="strand" evidence="5">
    <location>
        <begin position="30"/>
        <end position="52"/>
    </location>
</feature>
<feature type="helix" evidence="5">
    <location>
        <begin position="67"/>
        <end position="93"/>
    </location>
</feature>
<feature type="strand" evidence="5">
    <location>
        <begin position="95"/>
        <end position="98"/>
    </location>
</feature>
<feature type="helix" evidence="5">
    <location>
        <begin position="110"/>
        <end position="113"/>
    </location>
</feature>
<feature type="strand" evidence="5">
    <location>
        <begin position="115"/>
        <end position="117"/>
    </location>
</feature>
<feature type="helix" evidence="4">
    <location>
        <begin position="123"/>
        <end position="174"/>
    </location>
</feature>
<feature type="helix" evidence="4">
    <location>
        <begin position="176"/>
        <end position="182"/>
    </location>
</feature>
<feature type="helix" evidence="5">
    <location>
        <begin position="185"/>
        <end position="203"/>
    </location>
</feature>
<feature type="turn" evidence="5">
    <location>
        <begin position="204"/>
        <end position="206"/>
    </location>
</feature>
<feature type="helix" evidence="5">
    <location>
        <begin position="214"/>
        <end position="216"/>
    </location>
</feature>
<feature type="strand" evidence="6">
    <location>
        <begin position="217"/>
        <end position="219"/>
    </location>
</feature>
<feature type="helix" evidence="5">
    <location>
        <begin position="221"/>
        <end position="228"/>
    </location>
</feature>
<feature type="helix" evidence="5">
    <location>
        <begin position="229"/>
        <end position="231"/>
    </location>
</feature>
<feature type="helix" evidence="5">
    <location>
        <begin position="232"/>
        <end position="239"/>
    </location>
</feature>
<feature type="strand" evidence="5">
    <location>
        <begin position="242"/>
        <end position="244"/>
    </location>
</feature>
<feature type="helix" evidence="5">
    <location>
        <begin position="246"/>
        <end position="250"/>
    </location>
</feature>
<feature type="strand" evidence="5">
    <location>
        <begin position="256"/>
        <end position="263"/>
    </location>
</feature>
<feature type="turn" evidence="5">
    <location>
        <begin position="264"/>
        <end position="267"/>
    </location>
</feature>
<feature type="strand" evidence="5">
    <location>
        <begin position="268"/>
        <end position="291"/>
    </location>
</feature>
<feature type="strand" evidence="5">
    <location>
        <begin position="294"/>
        <end position="296"/>
    </location>
</feature>
<feature type="strand" evidence="5">
    <location>
        <begin position="299"/>
        <end position="303"/>
    </location>
</feature>
<feature type="strand" evidence="5">
    <location>
        <begin position="307"/>
        <end position="312"/>
    </location>
</feature>
<feature type="strand" evidence="5">
    <location>
        <begin position="315"/>
        <end position="318"/>
    </location>
</feature>
<feature type="strand" evidence="5">
    <location>
        <begin position="324"/>
        <end position="326"/>
    </location>
</feature>
<feature type="strand" evidence="5">
    <location>
        <begin position="328"/>
        <end position="332"/>
    </location>
</feature>
<feature type="helix" evidence="5">
    <location>
        <begin position="343"/>
        <end position="349"/>
    </location>
</feature>
<feature type="helix" evidence="5">
    <location>
        <begin position="353"/>
        <end position="355"/>
    </location>
</feature>
<feature type="strand" evidence="5">
    <location>
        <begin position="358"/>
        <end position="360"/>
    </location>
</feature>
<feature type="helix" evidence="5">
    <location>
        <begin position="365"/>
        <end position="367"/>
    </location>
</feature>
<feature type="strand" evidence="5">
    <location>
        <begin position="368"/>
        <end position="372"/>
    </location>
</feature>
<feature type="strand" evidence="5">
    <location>
        <begin position="375"/>
        <end position="378"/>
    </location>
</feature>
<feature type="turn" evidence="5">
    <location>
        <begin position="380"/>
        <end position="382"/>
    </location>
</feature>
<feature type="strand" evidence="5">
    <location>
        <begin position="385"/>
        <end position="389"/>
    </location>
</feature>
<feature type="strand" evidence="5">
    <location>
        <begin position="392"/>
        <end position="394"/>
    </location>
</feature>
<feature type="strand" evidence="5">
    <location>
        <begin position="401"/>
        <end position="405"/>
    </location>
</feature>
<feature type="turn" evidence="5">
    <location>
        <begin position="407"/>
        <end position="409"/>
    </location>
</feature>
<feature type="strand" evidence="5">
    <location>
        <begin position="411"/>
        <end position="415"/>
    </location>
</feature>
<feature type="strand" evidence="5">
    <location>
        <begin position="418"/>
        <end position="421"/>
    </location>
</feature>
<feature type="helix" evidence="5">
    <location>
        <begin position="438"/>
        <end position="440"/>
    </location>
</feature>
<feature type="helix" evidence="4">
    <location>
        <begin position="450"/>
        <end position="475"/>
    </location>
</feature>
<accession>P04849</accession>
<keyword id="KW-0002">3D-structure</keyword>
<keyword id="KW-0165">Cleavage on pair of basic residues</keyword>
<keyword id="KW-0175">Coiled coil</keyword>
<keyword id="KW-1015">Disulfide bond</keyword>
<keyword id="KW-1169">Fusion of virus membrane with host cell membrane</keyword>
<keyword id="KW-1168">Fusion of virus membrane with host membrane</keyword>
<keyword id="KW-0325">Glycoprotein</keyword>
<keyword id="KW-1032">Host cell membrane</keyword>
<keyword id="KW-1043">Host membrane</keyword>
<keyword id="KW-0472">Membrane</keyword>
<keyword id="KW-1185">Reference proteome</keyword>
<keyword id="KW-0732">Signal</keyword>
<keyword id="KW-0812">Transmembrane</keyword>
<keyword id="KW-1133">Transmembrane helix</keyword>
<keyword id="KW-0261">Viral envelope protein</keyword>
<keyword id="KW-1162">Viral penetration into host cytoplasm</keyword>
<keyword id="KW-0946">Virion</keyword>
<keyword id="KW-1160">Virus entry into host cell</keyword>
<organismHost>
    <name type="scientific">Canis lupus familiaris</name>
    <name type="common">Dog</name>
    <name type="synonym">Canis familiaris</name>
    <dbReference type="NCBI Taxonomy" id="9615"/>
</organismHost>
<organismHost>
    <name type="scientific">Homo sapiens</name>
    <name type="common">Human</name>
    <dbReference type="NCBI Taxonomy" id="9606"/>
</organismHost>
<protein>
    <recommendedName>
        <fullName>Fusion glycoprotein F0</fullName>
    </recommendedName>
    <component>
        <recommendedName>
            <fullName>Fusion glycoprotein F2</fullName>
        </recommendedName>
    </component>
    <component>
        <recommendedName>
            <fullName>Fusion glycoprotein F1</fullName>
        </recommendedName>
    </component>
</protein>
<dbReference type="EMBL" id="K02253">
    <property type="protein sequence ID" value="AAA47881.1"/>
    <property type="molecule type" value="Genomic_RNA"/>
</dbReference>
<dbReference type="EMBL" id="AF052755">
    <property type="protein sequence ID" value="AAC95515.1"/>
    <property type="molecule type" value="Genomic_RNA"/>
</dbReference>
<dbReference type="PIR" id="A21688">
    <property type="entry name" value="VGNZSP"/>
</dbReference>
<dbReference type="PDB" id="1SVF">
    <property type="method" value="X-ray"/>
    <property type="resolution" value="1.40 A"/>
    <property type="chains" value="A/C=122-185, B/D=440-477"/>
</dbReference>
<dbReference type="PDB" id="2B9B">
    <property type="method" value="X-ray"/>
    <property type="resolution" value="2.85 A"/>
    <property type="chains" value="A/B/C=20-475"/>
</dbReference>
<dbReference type="PDB" id="4GIP">
    <property type="method" value="X-ray"/>
    <property type="resolution" value="2.00 A"/>
    <property type="chains" value="A/B/C=20-100, D/E/F=103-477"/>
</dbReference>
<dbReference type="PDB" id="4WSG">
    <property type="method" value="X-ray"/>
    <property type="resolution" value="3.00 A"/>
    <property type="chains" value="A/B/C=23-477"/>
</dbReference>
<dbReference type="PDBsum" id="1SVF"/>
<dbReference type="PDBsum" id="2B9B"/>
<dbReference type="PDBsum" id="4GIP"/>
<dbReference type="PDBsum" id="4WSG"/>
<dbReference type="SMR" id="P04849"/>
<dbReference type="GlyCosmos" id="P04849">
    <property type="glycosylation" value="6 sites, No reported glycans"/>
</dbReference>
<dbReference type="KEGG" id="vg:3160801"/>
<dbReference type="EvolutionaryTrace" id="P04849"/>
<dbReference type="Proteomes" id="UP000007232">
    <property type="component" value="Segment"/>
</dbReference>
<dbReference type="GO" id="GO:0020002">
    <property type="term" value="C:host cell plasma membrane"/>
    <property type="evidence" value="ECO:0007669"/>
    <property type="project" value="UniProtKB-SubCell"/>
</dbReference>
<dbReference type="GO" id="GO:0016020">
    <property type="term" value="C:membrane"/>
    <property type="evidence" value="ECO:0007669"/>
    <property type="project" value="UniProtKB-KW"/>
</dbReference>
<dbReference type="GO" id="GO:0019031">
    <property type="term" value="C:viral envelope"/>
    <property type="evidence" value="ECO:0007669"/>
    <property type="project" value="UniProtKB-KW"/>
</dbReference>
<dbReference type="GO" id="GO:0055036">
    <property type="term" value="C:virion membrane"/>
    <property type="evidence" value="ECO:0007669"/>
    <property type="project" value="UniProtKB-SubCell"/>
</dbReference>
<dbReference type="GO" id="GO:0019064">
    <property type="term" value="P:fusion of virus membrane with host plasma membrane"/>
    <property type="evidence" value="ECO:0007669"/>
    <property type="project" value="UniProtKB-KW"/>
</dbReference>
<dbReference type="GO" id="GO:0046718">
    <property type="term" value="P:symbiont entry into host cell"/>
    <property type="evidence" value="ECO:0007669"/>
    <property type="project" value="UniProtKB-KW"/>
</dbReference>
<dbReference type="GO" id="GO:0046761">
    <property type="term" value="P:viral budding from plasma membrane"/>
    <property type="evidence" value="ECO:0000314"/>
    <property type="project" value="UniProtKB"/>
</dbReference>
<dbReference type="FunFam" id="2.60.40.1690:FF:000002">
    <property type="entry name" value="Fusion glycoprotein F0"/>
    <property type="match status" value="1"/>
</dbReference>
<dbReference type="Gene3D" id="1.10.287.2480">
    <property type="match status" value="1"/>
</dbReference>
<dbReference type="Gene3D" id="6.10.10.110">
    <property type="match status" value="1"/>
</dbReference>
<dbReference type="Gene3D" id="2.60.40.1690">
    <property type="entry name" value="Head and neck region of the ectodomain of NDV fusion glycoprotein"/>
    <property type="match status" value="1"/>
</dbReference>
<dbReference type="Gene3D" id="2.40.490.10">
    <property type="entry name" value="Newcastle disease virus like domain"/>
    <property type="match status" value="1"/>
</dbReference>
<dbReference type="InterPro" id="IPR000776">
    <property type="entry name" value="Fusion_F0_Paramyxovir"/>
</dbReference>
<dbReference type="Pfam" id="PF00523">
    <property type="entry name" value="Fusion_gly"/>
    <property type="match status" value="1"/>
</dbReference>
<dbReference type="SUPFAM" id="SSF69922">
    <property type="entry name" value="Head and neck region of the ectodomain of NDV fusion glycoprotein"/>
    <property type="match status" value="1"/>
</dbReference>
<dbReference type="SUPFAM" id="SSF58069">
    <property type="entry name" value="Virus ectodomain"/>
    <property type="match status" value="2"/>
</dbReference>
<gene>
    <name type="primary">F</name>
</gene>
<name>FUS_PIV5</name>
<reference key="1">
    <citation type="journal article" date="1984" name="Proc. Natl. Acad. Sci. U.S.A.">
        <title>Fusion protein of the paramyxovirus simian virus 5: nucleotide sequence of mRNA predicts a highly hydrophobic glycoprotein.</title>
        <authorList>
            <person name="Paterson R.G."/>
            <person name="Harris T.J.R."/>
            <person name="Lamb R.A."/>
        </authorList>
    </citation>
    <scope>NUCLEOTIDE SEQUENCE [GENOMIC RNA]</scope>
</reference>
<reference key="2">
    <citation type="journal article" date="1999" name="Mol. Cell">
        <title>Structural basis for paramyxovirus-mediated membrane fusion.</title>
        <authorList>
            <person name="Baker K.A."/>
            <person name="Dutch R.E."/>
            <person name="Lamb R.A."/>
            <person name="Jardetzky T.S."/>
        </authorList>
    </citation>
    <scope>X-RAY CRYSTALLOGRAPHY (1.4 ANGSTROMS) OF 122-185 AND 440-477</scope>
</reference>